<feature type="chain" id="PRO_0000375907" description="Uncharacterized membrane protein YhaH">
    <location>
        <begin position="1"/>
        <end position="118"/>
    </location>
</feature>
<feature type="transmembrane region" description="Helical" evidence="1">
    <location>
        <begin position="7"/>
        <end position="27"/>
    </location>
</feature>
<feature type="coiled-coil region" evidence="1">
    <location>
        <begin position="31"/>
        <end position="118"/>
    </location>
</feature>
<proteinExistence type="predicted"/>
<gene>
    <name type="primary">yhaH</name>
    <name type="ordered locus">BSU10000</name>
</gene>
<dbReference type="EMBL" id="Y14077">
    <property type="protein sequence ID" value="CAA74413.1"/>
    <property type="molecule type" value="Genomic_DNA"/>
</dbReference>
<dbReference type="EMBL" id="AL009126">
    <property type="protein sequence ID" value="CAB12840.1"/>
    <property type="molecule type" value="Genomic_DNA"/>
</dbReference>
<dbReference type="PIR" id="B69818">
    <property type="entry name" value="B69818"/>
</dbReference>
<dbReference type="RefSeq" id="NP_388881.1">
    <property type="nucleotide sequence ID" value="NC_000964.3"/>
</dbReference>
<dbReference type="RefSeq" id="WP_003245875.1">
    <property type="nucleotide sequence ID" value="NZ_OZ025638.1"/>
</dbReference>
<dbReference type="SMR" id="O07516"/>
<dbReference type="IntAct" id="O07516">
    <property type="interactions" value="1"/>
</dbReference>
<dbReference type="STRING" id="224308.BSU10000"/>
<dbReference type="PaxDb" id="224308-BSU10000"/>
<dbReference type="DNASU" id="936291"/>
<dbReference type="EnsemblBacteria" id="CAB12840">
    <property type="protein sequence ID" value="CAB12840"/>
    <property type="gene ID" value="BSU_10000"/>
</dbReference>
<dbReference type="GeneID" id="936291"/>
<dbReference type="KEGG" id="bsu:BSU10000"/>
<dbReference type="PATRIC" id="fig|224308.179.peg.1075"/>
<dbReference type="eggNOG" id="COG4980">
    <property type="taxonomic scope" value="Bacteria"/>
</dbReference>
<dbReference type="InParanoid" id="O07516"/>
<dbReference type="OrthoDB" id="2692215at2"/>
<dbReference type="PhylomeDB" id="O07516"/>
<dbReference type="BioCyc" id="BSUB:BSU10000-MONOMER"/>
<dbReference type="Proteomes" id="UP000001570">
    <property type="component" value="Chromosome"/>
</dbReference>
<dbReference type="GO" id="GO:0005886">
    <property type="term" value="C:plasma membrane"/>
    <property type="evidence" value="ECO:0007669"/>
    <property type="project" value="UniProtKB-SubCell"/>
</dbReference>
<dbReference type="InterPro" id="IPR052928">
    <property type="entry name" value="Desiccation-related_membrane"/>
</dbReference>
<dbReference type="InterPro" id="IPR036191">
    <property type="entry name" value="RRF_sf"/>
</dbReference>
<dbReference type="InterPro" id="IPR024623">
    <property type="entry name" value="YtxH"/>
</dbReference>
<dbReference type="PANTHER" id="PTHR35792">
    <property type="entry name" value="GENERAL STRESS PROTEIN"/>
    <property type="match status" value="1"/>
</dbReference>
<dbReference type="PANTHER" id="PTHR35792:SF3">
    <property type="entry name" value="IG HYPOTHETICAL 17707"/>
    <property type="match status" value="1"/>
</dbReference>
<dbReference type="Pfam" id="PF12732">
    <property type="entry name" value="YtxH"/>
    <property type="match status" value="1"/>
</dbReference>
<dbReference type="SUPFAM" id="SSF55194">
    <property type="entry name" value="Ribosome recycling factor, RRF"/>
    <property type="match status" value="1"/>
</dbReference>
<sequence length="118" mass="13066">MASGRSLLTGLFVGGIIGGAAVLLTAPSSGKQLREKMKTNYDSFEETIKRLKSDGLALKDQLIKAAKESTDVIKDVGGELQTSIKKWQEEIKPHQQDLQKEIADIEEKIRQLEKTLQN</sequence>
<keyword id="KW-1003">Cell membrane</keyword>
<keyword id="KW-0175">Coiled coil</keyword>
<keyword id="KW-0472">Membrane</keyword>
<keyword id="KW-1185">Reference proteome</keyword>
<keyword id="KW-0812">Transmembrane</keyword>
<keyword id="KW-1133">Transmembrane helix</keyword>
<reference key="1">
    <citation type="journal article" date="1998" name="Microbiology">
        <title>The 172 kb prkA-addAB region from 83 degrees to 97 degrees of the Bacillus subtilis chromosome contains several dysfunctional genes, the glyB marker, many genes encoding transporter proteins, and the ubiquitous hit gene.</title>
        <authorList>
            <person name="Noback M.A."/>
            <person name="Holsappel S."/>
            <person name="Kiewiet R."/>
            <person name="Terpstra P."/>
            <person name="Wambutt R."/>
            <person name="Wedler H."/>
            <person name="Venema G."/>
            <person name="Bron S."/>
        </authorList>
    </citation>
    <scope>NUCLEOTIDE SEQUENCE [GENOMIC DNA]</scope>
    <source>
        <strain>168</strain>
    </source>
</reference>
<reference key="2">
    <citation type="journal article" date="1997" name="Nature">
        <title>The complete genome sequence of the Gram-positive bacterium Bacillus subtilis.</title>
        <authorList>
            <person name="Kunst F."/>
            <person name="Ogasawara N."/>
            <person name="Moszer I."/>
            <person name="Albertini A.M."/>
            <person name="Alloni G."/>
            <person name="Azevedo V."/>
            <person name="Bertero M.G."/>
            <person name="Bessieres P."/>
            <person name="Bolotin A."/>
            <person name="Borchert S."/>
            <person name="Borriss R."/>
            <person name="Boursier L."/>
            <person name="Brans A."/>
            <person name="Braun M."/>
            <person name="Brignell S.C."/>
            <person name="Bron S."/>
            <person name="Brouillet S."/>
            <person name="Bruschi C.V."/>
            <person name="Caldwell B."/>
            <person name="Capuano V."/>
            <person name="Carter N.M."/>
            <person name="Choi S.-K."/>
            <person name="Codani J.-J."/>
            <person name="Connerton I.F."/>
            <person name="Cummings N.J."/>
            <person name="Daniel R.A."/>
            <person name="Denizot F."/>
            <person name="Devine K.M."/>
            <person name="Duesterhoeft A."/>
            <person name="Ehrlich S.D."/>
            <person name="Emmerson P.T."/>
            <person name="Entian K.-D."/>
            <person name="Errington J."/>
            <person name="Fabret C."/>
            <person name="Ferrari E."/>
            <person name="Foulger D."/>
            <person name="Fritz C."/>
            <person name="Fujita M."/>
            <person name="Fujita Y."/>
            <person name="Fuma S."/>
            <person name="Galizzi A."/>
            <person name="Galleron N."/>
            <person name="Ghim S.-Y."/>
            <person name="Glaser P."/>
            <person name="Goffeau A."/>
            <person name="Golightly E.J."/>
            <person name="Grandi G."/>
            <person name="Guiseppi G."/>
            <person name="Guy B.J."/>
            <person name="Haga K."/>
            <person name="Haiech J."/>
            <person name="Harwood C.R."/>
            <person name="Henaut A."/>
            <person name="Hilbert H."/>
            <person name="Holsappel S."/>
            <person name="Hosono S."/>
            <person name="Hullo M.-F."/>
            <person name="Itaya M."/>
            <person name="Jones L.-M."/>
            <person name="Joris B."/>
            <person name="Karamata D."/>
            <person name="Kasahara Y."/>
            <person name="Klaerr-Blanchard M."/>
            <person name="Klein C."/>
            <person name="Kobayashi Y."/>
            <person name="Koetter P."/>
            <person name="Koningstein G."/>
            <person name="Krogh S."/>
            <person name="Kumano M."/>
            <person name="Kurita K."/>
            <person name="Lapidus A."/>
            <person name="Lardinois S."/>
            <person name="Lauber J."/>
            <person name="Lazarevic V."/>
            <person name="Lee S.-M."/>
            <person name="Levine A."/>
            <person name="Liu H."/>
            <person name="Masuda S."/>
            <person name="Mauel C."/>
            <person name="Medigue C."/>
            <person name="Medina N."/>
            <person name="Mellado R.P."/>
            <person name="Mizuno M."/>
            <person name="Moestl D."/>
            <person name="Nakai S."/>
            <person name="Noback M."/>
            <person name="Noone D."/>
            <person name="O'Reilly M."/>
            <person name="Ogawa K."/>
            <person name="Ogiwara A."/>
            <person name="Oudega B."/>
            <person name="Park S.-H."/>
            <person name="Parro V."/>
            <person name="Pohl T.M."/>
            <person name="Portetelle D."/>
            <person name="Porwollik S."/>
            <person name="Prescott A.M."/>
            <person name="Presecan E."/>
            <person name="Pujic P."/>
            <person name="Purnelle B."/>
            <person name="Rapoport G."/>
            <person name="Rey M."/>
            <person name="Reynolds S."/>
            <person name="Rieger M."/>
            <person name="Rivolta C."/>
            <person name="Rocha E."/>
            <person name="Roche B."/>
            <person name="Rose M."/>
            <person name="Sadaie Y."/>
            <person name="Sato T."/>
            <person name="Scanlan E."/>
            <person name="Schleich S."/>
            <person name="Schroeter R."/>
            <person name="Scoffone F."/>
            <person name="Sekiguchi J."/>
            <person name="Sekowska A."/>
            <person name="Seror S.J."/>
            <person name="Serror P."/>
            <person name="Shin B.-S."/>
            <person name="Soldo B."/>
            <person name="Sorokin A."/>
            <person name="Tacconi E."/>
            <person name="Takagi T."/>
            <person name="Takahashi H."/>
            <person name="Takemaru K."/>
            <person name="Takeuchi M."/>
            <person name="Tamakoshi A."/>
            <person name="Tanaka T."/>
            <person name="Terpstra P."/>
            <person name="Tognoni A."/>
            <person name="Tosato V."/>
            <person name="Uchiyama S."/>
            <person name="Vandenbol M."/>
            <person name="Vannier F."/>
            <person name="Vassarotti A."/>
            <person name="Viari A."/>
            <person name="Wambutt R."/>
            <person name="Wedler E."/>
            <person name="Wedler H."/>
            <person name="Weitzenegger T."/>
            <person name="Winters P."/>
            <person name="Wipat A."/>
            <person name="Yamamoto H."/>
            <person name="Yamane K."/>
            <person name="Yasumoto K."/>
            <person name="Yata K."/>
            <person name="Yoshida K."/>
            <person name="Yoshikawa H.-F."/>
            <person name="Zumstein E."/>
            <person name="Yoshikawa H."/>
            <person name="Danchin A."/>
        </authorList>
    </citation>
    <scope>NUCLEOTIDE SEQUENCE [LARGE SCALE GENOMIC DNA]</scope>
    <source>
        <strain>168</strain>
    </source>
</reference>
<protein>
    <recommendedName>
        <fullName>Uncharacterized membrane protein YhaH</fullName>
    </recommendedName>
</protein>
<organism>
    <name type="scientific">Bacillus subtilis (strain 168)</name>
    <dbReference type="NCBI Taxonomy" id="224308"/>
    <lineage>
        <taxon>Bacteria</taxon>
        <taxon>Bacillati</taxon>
        <taxon>Bacillota</taxon>
        <taxon>Bacilli</taxon>
        <taxon>Bacillales</taxon>
        <taxon>Bacillaceae</taxon>
        <taxon>Bacillus</taxon>
    </lineage>
</organism>
<evidence type="ECO:0000255" key="1"/>
<evidence type="ECO:0000305" key="2"/>
<comment type="subcellular location">
    <subcellularLocation>
        <location evidence="2">Cell membrane</location>
        <topology evidence="2">Single-pass membrane protein</topology>
    </subcellularLocation>
</comment>
<accession>O07516</accession>
<accession>Q796U9</accession>
<name>YHAH_BACSU</name>